<organism>
    <name type="scientific">Bacillus thuringiensis (strain Al Hakam)</name>
    <dbReference type="NCBI Taxonomy" id="412694"/>
    <lineage>
        <taxon>Bacteria</taxon>
        <taxon>Bacillati</taxon>
        <taxon>Bacillota</taxon>
        <taxon>Bacilli</taxon>
        <taxon>Bacillales</taxon>
        <taxon>Bacillaceae</taxon>
        <taxon>Bacillus</taxon>
        <taxon>Bacillus cereus group</taxon>
    </lineage>
</organism>
<accession>A0RE53</accession>
<proteinExistence type="inferred from homology"/>
<dbReference type="EC" id="2.7.1.170" evidence="1"/>
<dbReference type="EMBL" id="CP000485">
    <property type="protein sequence ID" value="ABK85496.1"/>
    <property type="molecule type" value="Genomic_DNA"/>
</dbReference>
<dbReference type="SMR" id="A0RE53"/>
<dbReference type="KEGG" id="btl:BALH_2195"/>
<dbReference type="HOGENOM" id="CLU_038782_1_0_9"/>
<dbReference type="UniPathway" id="UPA00343"/>
<dbReference type="UniPathway" id="UPA00544"/>
<dbReference type="GO" id="GO:0005524">
    <property type="term" value="F:ATP binding"/>
    <property type="evidence" value="ECO:0007669"/>
    <property type="project" value="UniProtKB-UniRule"/>
</dbReference>
<dbReference type="GO" id="GO:0016301">
    <property type="term" value="F:kinase activity"/>
    <property type="evidence" value="ECO:0007669"/>
    <property type="project" value="UniProtKB-KW"/>
</dbReference>
<dbReference type="GO" id="GO:0016773">
    <property type="term" value="F:phosphotransferase activity, alcohol group as acceptor"/>
    <property type="evidence" value="ECO:0007669"/>
    <property type="project" value="UniProtKB-UniRule"/>
</dbReference>
<dbReference type="GO" id="GO:0097175">
    <property type="term" value="P:1,6-anhydro-N-acetyl-beta-muramic acid catabolic process"/>
    <property type="evidence" value="ECO:0007669"/>
    <property type="project" value="UniProtKB-UniRule"/>
</dbReference>
<dbReference type="GO" id="GO:0006040">
    <property type="term" value="P:amino sugar metabolic process"/>
    <property type="evidence" value="ECO:0007669"/>
    <property type="project" value="InterPro"/>
</dbReference>
<dbReference type="GO" id="GO:0009254">
    <property type="term" value="P:peptidoglycan turnover"/>
    <property type="evidence" value="ECO:0007669"/>
    <property type="project" value="UniProtKB-UniRule"/>
</dbReference>
<dbReference type="CDD" id="cd24050">
    <property type="entry name" value="ASKHA_NBD_ANMK"/>
    <property type="match status" value="1"/>
</dbReference>
<dbReference type="Gene3D" id="3.30.420.40">
    <property type="match status" value="2"/>
</dbReference>
<dbReference type="HAMAP" id="MF_01270">
    <property type="entry name" value="AnhMurNAc_kinase"/>
    <property type="match status" value="1"/>
</dbReference>
<dbReference type="InterPro" id="IPR005338">
    <property type="entry name" value="Anhydro_N_Ac-Mur_kinase"/>
</dbReference>
<dbReference type="InterPro" id="IPR043129">
    <property type="entry name" value="ATPase_NBD"/>
</dbReference>
<dbReference type="NCBIfam" id="NF007142">
    <property type="entry name" value="PRK09585.2-1"/>
    <property type="match status" value="1"/>
</dbReference>
<dbReference type="NCBIfam" id="NF007148">
    <property type="entry name" value="PRK09585.3-2"/>
    <property type="match status" value="1"/>
</dbReference>
<dbReference type="PANTHER" id="PTHR30605">
    <property type="entry name" value="ANHYDRO-N-ACETYLMURAMIC ACID KINASE"/>
    <property type="match status" value="1"/>
</dbReference>
<dbReference type="PANTHER" id="PTHR30605:SF0">
    <property type="entry name" value="ANHYDRO-N-ACETYLMURAMIC ACID KINASE"/>
    <property type="match status" value="1"/>
</dbReference>
<dbReference type="Pfam" id="PF03702">
    <property type="entry name" value="AnmK"/>
    <property type="match status" value="1"/>
</dbReference>
<dbReference type="SUPFAM" id="SSF53067">
    <property type="entry name" value="Actin-like ATPase domain"/>
    <property type="match status" value="1"/>
</dbReference>
<comment type="function">
    <text evidence="1">Catalyzes the specific phosphorylation of 1,6-anhydro-N-acetylmuramic acid (anhMurNAc) with the simultaneous cleavage of the 1,6-anhydro ring, generating MurNAc-6-P. Is required for the utilization of anhMurNAc either imported from the medium or derived from its own cell wall murein, and thus plays a role in cell wall recycling.</text>
</comment>
<comment type="catalytic activity">
    <reaction evidence="1">
        <text>1,6-anhydro-N-acetyl-beta-muramate + ATP + H2O = N-acetyl-D-muramate 6-phosphate + ADP + H(+)</text>
        <dbReference type="Rhea" id="RHEA:24952"/>
        <dbReference type="ChEBI" id="CHEBI:15377"/>
        <dbReference type="ChEBI" id="CHEBI:15378"/>
        <dbReference type="ChEBI" id="CHEBI:30616"/>
        <dbReference type="ChEBI" id="CHEBI:58690"/>
        <dbReference type="ChEBI" id="CHEBI:58722"/>
        <dbReference type="ChEBI" id="CHEBI:456216"/>
        <dbReference type="EC" id="2.7.1.170"/>
    </reaction>
</comment>
<comment type="pathway">
    <text evidence="1">Amino-sugar metabolism; 1,6-anhydro-N-acetylmuramate degradation.</text>
</comment>
<comment type="pathway">
    <text evidence="1">Cell wall biogenesis; peptidoglycan recycling.</text>
</comment>
<comment type="similarity">
    <text evidence="1">Belongs to the anhydro-N-acetylmuramic acid kinase family.</text>
</comment>
<evidence type="ECO:0000255" key="1">
    <source>
        <dbReference type="HAMAP-Rule" id="MF_01270"/>
    </source>
</evidence>
<sequence>MHVMYIAGVMSGTSLDGIDVALVRIEGSGVESKVELIHFTTVPFCNDIKSEIQQALSIENSNVQLICSLNFKLGLCFANAVKEVCKEANFSLEQLDLIGSHGQTIYHQPKQDGNRIPSTLQIGEPAVIAYETNTTVISNFRTMDMAAGGQGAPLVPYSEVILYRDPSKNRLLQNIGGISNVTVIPNQQSDQNVIAFDTGPGNMIIDEVCQRLFQLPYDQNGEIAKQGRVVNEILTYCMSHQFLKMNPPKSTGREQFGEKFVSELLKRFEKHSKENILTTVTMFTANSIVHHYKKFILPYYEIDEVILGGGGSYNSTLVEMLRNGLKDENCAIFIQEDIGYSSEAKEAIAFAILANETHHCNPSNVPSATGAKQSVVLGNITFPPV</sequence>
<name>ANMK_BACAH</name>
<protein>
    <recommendedName>
        <fullName evidence="1">Anhydro-N-acetylmuramic acid kinase</fullName>
        <ecNumber evidence="1">2.7.1.170</ecNumber>
    </recommendedName>
    <alternativeName>
        <fullName evidence="1">AnhMurNAc kinase</fullName>
    </alternativeName>
</protein>
<gene>
    <name evidence="1" type="primary">anmK</name>
    <name type="ordered locus">BALH_2195</name>
</gene>
<feature type="chain" id="PRO_1000067342" description="Anhydro-N-acetylmuramic acid kinase">
    <location>
        <begin position="1"/>
        <end position="385"/>
    </location>
</feature>
<feature type="binding site" evidence="1">
    <location>
        <begin position="12"/>
        <end position="19"/>
    </location>
    <ligand>
        <name>ATP</name>
        <dbReference type="ChEBI" id="CHEBI:30616"/>
    </ligand>
</feature>
<reference key="1">
    <citation type="journal article" date="2007" name="J. Bacteriol.">
        <title>The complete genome sequence of Bacillus thuringiensis Al Hakam.</title>
        <authorList>
            <person name="Challacombe J.F."/>
            <person name="Altherr M.R."/>
            <person name="Xie G."/>
            <person name="Bhotika S.S."/>
            <person name="Brown N."/>
            <person name="Bruce D."/>
            <person name="Campbell C.S."/>
            <person name="Campbell M.L."/>
            <person name="Chen J."/>
            <person name="Chertkov O."/>
            <person name="Cleland C."/>
            <person name="Dimitrijevic M."/>
            <person name="Doggett N.A."/>
            <person name="Fawcett J.J."/>
            <person name="Glavina T."/>
            <person name="Goodwin L.A."/>
            <person name="Green L.D."/>
            <person name="Han C.S."/>
            <person name="Hill K.K."/>
            <person name="Hitchcock P."/>
            <person name="Jackson P.J."/>
            <person name="Keim P."/>
            <person name="Kewalramani A.R."/>
            <person name="Longmire J."/>
            <person name="Lucas S."/>
            <person name="Malfatti S."/>
            <person name="Martinez D."/>
            <person name="McMurry K."/>
            <person name="Meincke L.J."/>
            <person name="Misra M."/>
            <person name="Moseman B.L."/>
            <person name="Mundt M."/>
            <person name="Munk A.C."/>
            <person name="Okinaka R.T."/>
            <person name="Parson-Quintana B."/>
            <person name="Reilly L.P."/>
            <person name="Richardson P."/>
            <person name="Robinson D.L."/>
            <person name="Saunders E."/>
            <person name="Tapia R."/>
            <person name="Tesmer J.G."/>
            <person name="Thayer N."/>
            <person name="Thompson L.S."/>
            <person name="Tice H."/>
            <person name="Ticknor L.O."/>
            <person name="Wills P.L."/>
            <person name="Gilna P."/>
            <person name="Brettin T.S."/>
        </authorList>
    </citation>
    <scope>NUCLEOTIDE SEQUENCE [LARGE SCALE GENOMIC DNA]</scope>
    <source>
        <strain>Al Hakam</strain>
    </source>
</reference>
<keyword id="KW-0067">ATP-binding</keyword>
<keyword id="KW-0119">Carbohydrate metabolism</keyword>
<keyword id="KW-0418">Kinase</keyword>
<keyword id="KW-0547">Nucleotide-binding</keyword>
<keyword id="KW-0808">Transferase</keyword>